<evidence type="ECO:0000255" key="1">
    <source>
        <dbReference type="HAMAP-Rule" id="MF_01343"/>
    </source>
</evidence>
<evidence type="ECO:0000305" key="2"/>
<sequence length="89" mass="10126">MSLNAETKAAIVAEYARCENDTGSPEVQIALLTASINHLQGHFQAHKGDHHSRRGLLRMVSSRRKLLDYLKGKDLSRYQDLIKRLGLRR</sequence>
<gene>
    <name evidence="1" type="primary">rpsO</name>
    <name type="ordered locus">VCM66_0604</name>
</gene>
<dbReference type="EMBL" id="CP001233">
    <property type="protein sequence ID" value="ACP04927.1"/>
    <property type="molecule type" value="Genomic_DNA"/>
</dbReference>
<dbReference type="RefSeq" id="WP_000055654.1">
    <property type="nucleotide sequence ID" value="NC_012578.1"/>
</dbReference>
<dbReference type="SMR" id="C3LSQ1"/>
<dbReference type="GeneID" id="89515201"/>
<dbReference type="KEGG" id="vcm:VCM66_0604"/>
<dbReference type="HOGENOM" id="CLU_148518_0_0_6"/>
<dbReference type="Proteomes" id="UP000001217">
    <property type="component" value="Chromosome I"/>
</dbReference>
<dbReference type="GO" id="GO:0022627">
    <property type="term" value="C:cytosolic small ribosomal subunit"/>
    <property type="evidence" value="ECO:0007669"/>
    <property type="project" value="TreeGrafter"/>
</dbReference>
<dbReference type="GO" id="GO:0019843">
    <property type="term" value="F:rRNA binding"/>
    <property type="evidence" value="ECO:0007669"/>
    <property type="project" value="UniProtKB-UniRule"/>
</dbReference>
<dbReference type="GO" id="GO:0003735">
    <property type="term" value="F:structural constituent of ribosome"/>
    <property type="evidence" value="ECO:0007669"/>
    <property type="project" value="InterPro"/>
</dbReference>
<dbReference type="GO" id="GO:0006412">
    <property type="term" value="P:translation"/>
    <property type="evidence" value="ECO:0007669"/>
    <property type="project" value="UniProtKB-UniRule"/>
</dbReference>
<dbReference type="CDD" id="cd00353">
    <property type="entry name" value="Ribosomal_S15p_S13e"/>
    <property type="match status" value="1"/>
</dbReference>
<dbReference type="FunFam" id="1.10.287.10:FF:000002">
    <property type="entry name" value="30S ribosomal protein S15"/>
    <property type="match status" value="1"/>
</dbReference>
<dbReference type="Gene3D" id="6.10.250.3130">
    <property type="match status" value="1"/>
</dbReference>
<dbReference type="Gene3D" id="1.10.287.10">
    <property type="entry name" value="S15/NS1, RNA-binding"/>
    <property type="match status" value="1"/>
</dbReference>
<dbReference type="HAMAP" id="MF_01343_B">
    <property type="entry name" value="Ribosomal_uS15_B"/>
    <property type="match status" value="1"/>
</dbReference>
<dbReference type="InterPro" id="IPR000589">
    <property type="entry name" value="Ribosomal_uS15"/>
</dbReference>
<dbReference type="InterPro" id="IPR005290">
    <property type="entry name" value="Ribosomal_uS15_bac-type"/>
</dbReference>
<dbReference type="InterPro" id="IPR009068">
    <property type="entry name" value="uS15_NS1_RNA-bd_sf"/>
</dbReference>
<dbReference type="NCBIfam" id="TIGR00952">
    <property type="entry name" value="S15_bact"/>
    <property type="match status" value="1"/>
</dbReference>
<dbReference type="PANTHER" id="PTHR23321">
    <property type="entry name" value="RIBOSOMAL PROTEIN S15, BACTERIAL AND ORGANELLAR"/>
    <property type="match status" value="1"/>
</dbReference>
<dbReference type="PANTHER" id="PTHR23321:SF26">
    <property type="entry name" value="SMALL RIBOSOMAL SUBUNIT PROTEIN US15M"/>
    <property type="match status" value="1"/>
</dbReference>
<dbReference type="Pfam" id="PF00312">
    <property type="entry name" value="Ribosomal_S15"/>
    <property type="match status" value="1"/>
</dbReference>
<dbReference type="SMART" id="SM01387">
    <property type="entry name" value="Ribosomal_S15"/>
    <property type="match status" value="1"/>
</dbReference>
<dbReference type="SUPFAM" id="SSF47060">
    <property type="entry name" value="S15/NS1 RNA-binding domain"/>
    <property type="match status" value="1"/>
</dbReference>
<dbReference type="PROSITE" id="PS00362">
    <property type="entry name" value="RIBOSOMAL_S15"/>
    <property type="match status" value="1"/>
</dbReference>
<protein>
    <recommendedName>
        <fullName evidence="1">Small ribosomal subunit protein uS15</fullName>
    </recommendedName>
    <alternativeName>
        <fullName evidence="2">30S ribosomal protein S15</fullName>
    </alternativeName>
</protein>
<name>RS15_VIBCM</name>
<proteinExistence type="inferred from homology"/>
<feature type="chain" id="PRO_1000166447" description="Small ribosomal subunit protein uS15">
    <location>
        <begin position="1"/>
        <end position="89"/>
    </location>
</feature>
<reference key="1">
    <citation type="journal article" date="2008" name="PLoS ONE">
        <title>A recalibrated molecular clock and independent origins for the cholera pandemic clones.</title>
        <authorList>
            <person name="Feng L."/>
            <person name="Reeves P.R."/>
            <person name="Lan R."/>
            <person name="Ren Y."/>
            <person name="Gao C."/>
            <person name="Zhou Z."/>
            <person name="Ren Y."/>
            <person name="Cheng J."/>
            <person name="Wang W."/>
            <person name="Wang J."/>
            <person name="Qian W."/>
            <person name="Li D."/>
            <person name="Wang L."/>
        </authorList>
    </citation>
    <scope>NUCLEOTIDE SEQUENCE [LARGE SCALE GENOMIC DNA]</scope>
    <source>
        <strain>M66-2</strain>
    </source>
</reference>
<organism>
    <name type="scientific">Vibrio cholerae serotype O1 (strain M66-2)</name>
    <dbReference type="NCBI Taxonomy" id="579112"/>
    <lineage>
        <taxon>Bacteria</taxon>
        <taxon>Pseudomonadati</taxon>
        <taxon>Pseudomonadota</taxon>
        <taxon>Gammaproteobacteria</taxon>
        <taxon>Vibrionales</taxon>
        <taxon>Vibrionaceae</taxon>
        <taxon>Vibrio</taxon>
    </lineage>
</organism>
<comment type="function">
    <text evidence="1">One of the primary rRNA binding proteins, it binds directly to 16S rRNA where it helps nucleate assembly of the platform of the 30S subunit by binding and bridging several RNA helices of the 16S rRNA.</text>
</comment>
<comment type="function">
    <text evidence="1">Forms an intersubunit bridge (bridge B4) with the 23S rRNA of the 50S subunit in the ribosome.</text>
</comment>
<comment type="subunit">
    <text evidence="1">Part of the 30S ribosomal subunit. Forms a bridge to the 50S subunit in the 70S ribosome, contacting the 23S rRNA.</text>
</comment>
<comment type="similarity">
    <text evidence="1">Belongs to the universal ribosomal protein uS15 family.</text>
</comment>
<accession>C3LSQ1</accession>
<keyword id="KW-0687">Ribonucleoprotein</keyword>
<keyword id="KW-0689">Ribosomal protein</keyword>
<keyword id="KW-0694">RNA-binding</keyword>
<keyword id="KW-0699">rRNA-binding</keyword>